<comment type="function">
    <text evidence="1">DNA-dependent RNA polymerase catalyzes the transcription of DNA into RNA using the four ribonucleoside triphosphates as substrates.</text>
</comment>
<comment type="catalytic activity">
    <reaction evidence="1">
        <text>RNA(n) + a ribonucleoside 5'-triphosphate = RNA(n+1) + diphosphate</text>
        <dbReference type="Rhea" id="RHEA:21248"/>
        <dbReference type="Rhea" id="RHEA-COMP:14527"/>
        <dbReference type="Rhea" id="RHEA-COMP:17342"/>
        <dbReference type="ChEBI" id="CHEBI:33019"/>
        <dbReference type="ChEBI" id="CHEBI:61557"/>
        <dbReference type="ChEBI" id="CHEBI:140395"/>
        <dbReference type="EC" id="2.7.7.6"/>
    </reaction>
</comment>
<comment type="subunit">
    <text evidence="1">Homodimer. The RNAP catalytic core consists of 2 alpha, 1 beta, 1 beta' and 1 omega subunit. When a sigma factor is associated with the core the holoenzyme is formed, which can initiate transcription.</text>
</comment>
<comment type="domain">
    <text evidence="1">The N-terminal domain is essential for RNAP assembly and basal transcription, whereas the C-terminal domain is involved in interaction with transcriptional regulators and with upstream promoter elements.</text>
</comment>
<comment type="similarity">
    <text evidence="1">Belongs to the RNA polymerase alpha chain family.</text>
</comment>
<dbReference type="EC" id="2.7.7.6" evidence="1"/>
<dbReference type="EMBL" id="CP000016">
    <property type="protein sequence ID" value="AAZ40856.1"/>
    <property type="molecule type" value="Genomic_DNA"/>
</dbReference>
<dbReference type="RefSeq" id="WP_011282763.1">
    <property type="nucleotide sequence ID" value="NC_007292.1"/>
</dbReference>
<dbReference type="SMR" id="Q493I4"/>
<dbReference type="STRING" id="291272.BPEN_223"/>
<dbReference type="KEGG" id="bpn:BPEN_223"/>
<dbReference type="eggNOG" id="COG0202">
    <property type="taxonomic scope" value="Bacteria"/>
</dbReference>
<dbReference type="HOGENOM" id="CLU_053084_0_0_6"/>
<dbReference type="OrthoDB" id="9805706at2"/>
<dbReference type="Proteomes" id="UP000007794">
    <property type="component" value="Chromosome"/>
</dbReference>
<dbReference type="GO" id="GO:0005737">
    <property type="term" value="C:cytoplasm"/>
    <property type="evidence" value="ECO:0007669"/>
    <property type="project" value="UniProtKB-ARBA"/>
</dbReference>
<dbReference type="GO" id="GO:0000428">
    <property type="term" value="C:DNA-directed RNA polymerase complex"/>
    <property type="evidence" value="ECO:0007669"/>
    <property type="project" value="UniProtKB-KW"/>
</dbReference>
<dbReference type="GO" id="GO:0003677">
    <property type="term" value="F:DNA binding"/>
    <property type="evidence" value="ECO:0007669"/>
    <property type="project" value="UniProtKB-UniRule"/>
</dbReference>
<dbReference type="GO" id="GO:0003899">
    <property type="term" value="F:DNA-directed RNA polymerase activity"/>
    <property type="evidence" value="ECO:0007669"/>
    <property type="project" value="UniProtKB-UniRule"/>
</dbReference>
<dbReference type="GO" id="GO:0046983">
    <property type="term" value="F:protein dimerization activity"/>
    <property type="evidence" value="ECO:0007669"/>
    <property type="project" value="InterPro"/>
</dbReference>
<dbReference type="GO" id="GO:0006351">
    <property type="term" value="P:DNA-templated transcription"/>
    <property type="evidence" value="ECO:0007669"/>
    <property type="project" value="UniProtKB-UniRule"/>
</dbReference>
<dbReference type="CDD" id="cd06928">
    <property type="entry name" value="RNAP_alpha_NTD"/>
    <property type="match status" value="1"/>
</dbReference>
<dbReference type="FunFam" id="1.10.150.20:FF:000001">
    <property type="entry name" value="DNA-directed RNA polymerase subunit alpha"/>
    <property type="match status" value="1"/>
</dbReference>
<dbReference type="FunFam" id="2.170.120.12:FF:000001">
    <property type="entry name" value="DNA-directed RNA polymerase subunit alpha"/>
    <property type="match status" value="1"/>
</dbReference>
<dbReference type="Gene3D" id="1.10.150.20">
    <property type="entry name" value="5' to 3' exonuclease, C-terminal subdomain"/>
    <property type="match status" value="1"/>
</dbReference>
<dbReference type="Gene3D" id="2.170.120.12">
    <property type="entry name" value="DNA-directed RNA polymerase, insert domain"/>
    <property type="match status" value="1"/>
</dbReference>
<dbReference type="Gene3D" id="3.30.1360.10">
    <property type="entry name" value="RNA polymerase, RBP11-like subunit"/>
    <property type="match status" value="1"/>
</dbReference>
<dbReference type="HAMAP" id="MF_00059">
    <property type="entry name" value="RNApol_bact_RpoA"/>
    <property type="match status" value="1"/>
</dbReference>
<dbReference type="InterPro" id="IPR011262">
    <property type="entry name" value="DNA-dir_RNA_pol_insert"/>
</dbReference>
<dbReference type="InterPro" id="IPR011263">
    <property type="entry name" value="DNA-dir_RNA_pol_RpoA/D/Rpb3"/>
</dbReference>
<dbReference type="InterPro" id="IPR011773">
    <property type="entry name" value="DNA-dir_RpoA"/>
</dbReference>
<dbReference type="InterPro" id="IPR036603">
    <property type="entry name" value="RBP11-like"/>
</dbReference>
<dbReference type="InterPro" id="IPR011260">
    <property type="entry name" value="RNAP_asu_C"/>
</dbReference>
<dbReference type="InterPro" id="IPR036643">
    <property type="entry name" value="RNApol_insert_sf"/>
</dbReference>
<dbReference type="NCBIfam" id="NF003513">
    <property type="entry name" value="PRK05182.1-2"/>
    <property type="match status" value="1"/>
</dbReference>
<dbReference type="NCBIfam" id="NF003519">
    <property type="entry name" value="PRK05182.2-5"/>
    <property type="match status" value="1"/>
</dbReference>
<dbReference type="NCBIfam" id="TIGR02027">
    <property type="entry name" value="rpoA"/>
    <property type="match status" value="1"/>
</dbReference>
<dbReference type="Pfam" id="PF01000">
    <property type="entry name" value="RNA_pol_A_bac"/>
    <property type="match status" value="1"/>
</dbReference>
<dbReference type="Pfam" id="PF03118">
    <property type="entry name" value="RNA_pol_A_CTD"/>
    <property type="match status" value="1"/>
</dbReference>
<dbReference type="Pfam" id="PF01193">
    <property type="entry name" value="RNA_pol_L"/>
    <property type="match status" value="1"/>
</dbReference>
<dbReference type="SMART" id="SM00662">
    <property type="entry name" value="RPOLD"/>
    <property type="match status" value="1"/>
</dbReference>
<dbReference type="SUPFAM" id="SSF47789">
    <property type="entry name" value="C-terminal domain of RNA polymerase alpha subunit"/>
    <property type="match status" value="1"/>
</dbReference>
<dbReference type="SUPFAM" id="SSF56553">
    <property type="entry name" value="Insert subdomain of RNA polymerase alpha subunit"/>
    <property type="match status" value="1"/>
</dbReference>
<dbReference type="SUPFAM" id="SSF55257">
    <property type="entry name" value="RBP11-like subunits of RNA polymerase"/>
    <property type="match status" value="1"/>
</dbReference>
<proteinExistence type="inferred from homology"/>
<sequence length="330" mass="37073">MQNSVIEFLKPRLVDIEQITETRAKVTLEPLERGFGHTLGNALRRILLSSMPGYAITEVEIDGVLHEYSTKEGIQEDVLEILLNLKKLAIRIEGKDSVTLTLKKSGIGPVIANDILYDSNSVKIVTPNHIICHITDKNTSISMSIKVQRGRGYVPASSRFHSESDILPIGRLLLDACYSPVERISYNVEAARVEQRTDLDKLIIDMETDGTIEPEEAIRRAATILSEQLEAFIDLRDIHQPEHKEEKPEFDPILLRLVDDLELTVRSANCLKAESIHYIGDLVQRTEIELLKTPNLGKKSLTEIKDVLASRGLSLGTRLENWPPTNILDN</sequence>
<reference key="1">
    <citation type="journal article" date="2005" name="Genome Res.">
        <title>Genome sequence of Blochmannia pennsylvanicus indicates parallel evolutionary trends among bacterial mutualists of insects.</title>
        <authorList>
            <person name="Degnan P.H."/>
            <person name="Lazarus A.B."/>
            <person name="Wernegreen J.J."/>
        </authorList>
    </citation>
    <scope>NUCLEOTIDE SEQUENCE [LARGE SCALE GENOMIC DNA]</scope>
    <source>
        <strain>BPEN</strain>
    </source>
</reference>
<feature type="chain" id="PRO_0000225259" description="DNA-directed RNA polymerase subunit alpha">
    <location>
        <begin position="1"/>
        <end position="330"/>
    </location>
</feature>
<feature type="region of interest" description="Alpha N-terminal domain (alpha-NTD)" evidence="1">
    <location>
        <begin position="1"/>
        <end position="236"/>
    </location>
</feature>
<feature type="region of interest" description="Alpha C-terminal domain (alpha-CTD)" evidence="1">
    <location>
        <begin position="250"/>
        <end position="330"/>
    </location>
</feature>
<evidence type="ECO:0000255" key="1">
    <source>
        <dbReference type="HAMAP-Rule" id="MF_00059"/>
    </source>
</evidence>
<protein>
    <recommendedName>
        <fullName evidence="1">DNA-directed RNA polymerase subunit alpha</fullName>
        <shortName evidence="1">RNAP subunit alpha</shortName>
        <ecNumber evidence="1">2.7.7.6</ecNumber>
    </recommendedName>
    <alternativeName>
        <fullName evidence="1">RNA polymerase subunit alpha</fullName>
    </alternativeName>
    <alternativeName>
        <fullName evidence="1">Transcriptase subunit alpha</fullName>
    </alternativeName>
</protein>
<keyword id="KW-0240">DNA-directed RNA polymerase</keyword>
<keyword id="KW-0548">Nucleotidyltransferase</keyword>
<keyword id="KW-1185">Reference proteome</keyword>
<keyword id="KW-0804">Transcription</keyword>
<keyword id="KW-0808">Transferase</keyword>
<name>RPOA_BLOPB</name>
<organism>
    <name type="scientific">Blochmanniella pennsylvanica (strain BPEN)</name>
    <dbReference type="NCBI Taxonomy" id="291272"/>
    <lineage>
        <taxon>Bacteria</taxon>
        <taxon>Pseudomonadati</taxon>
        <taxon>Pseudomonadota</taxon>
        <taxon>Gammaproteobacteria</taxon>
        <taxon>Enterobacterales</taxon>
        <taxon>Enterobacteriaceae</taxon>
        <taxon>ant endosymbionts</taxon>
        <taxon>Candidatus Blochmanniella</taxon>
    </lineage>
</organism>
<gene>
    <name evidence="1" type="primary">rpoA</name>
    <name type="ordered locus">BPEN_223</name>
</gene>
<accession>Q493I4</accession>